<comment type="function">
    <text evidence="1">Major role in the synthesis of nucleoside triphosphates other than ATP. The ATP gamma phosphate is transferred to the NDP beta phosphate via a ping-pong mechanism, using a phosphorylated active-site intermediate.</text>
</comment>
<comment type="catalytic activity">
    <reaction evidence="1">
        <text>a 2'-deoxyribonucleoside 5'-diphosphate + ATP = a 2'-deoxyribonucleoside 5'-triphosphate + ADP</text>
        <dbReference type="Rhea" id="RHEA:44640"/>
        <dbReference type="ChEBI" id="CHEBI:30616"/>
        <dbReference type="ChEBI" id="CHEBI:61560"/>
        <dbReference type="ChEBI" id="CHEBI:73316"/>
        <dbReference type="ChEBI" id="CHEBI:456216"/>
        <dbReference type="EC" id="2.7.4.6"/>
    </reaction>
</comment>
<comment type="catalytic activity">
    <reaction evidence="1">
        <text>a ribonucleoside 5'-diphosphate + ATP = a ribonucleoside 5'-triphosphate + ADP</text>
        <dbReference type="Rhea" id="RHEA:18113"/>
        <dbReference type="ChEBI" id="CHEBI:30616"/>
        <dbReference type="ChEBI" id="CHEBI:57930"/>
        <dbReference type="ChEBI" id="CHEBI:61557"/>
        <dbReference type="ChEBI" id="CHEBI:456216"/>
        <dbReference type="EC" id="2.7.4.6"/>
    </reaction>
</comment>
<comment type="cofactor">
    <cofactor evidence="1">
        <name>Mg(2+)</name>
        <dbReference type="ChEBI" id="CHEBI:18420"/>
    </cofactor>
</comment>
<comment type="subunit">
    <text evidence="1">Homotetramer.</text>
</comment>
<comment type="subcellular location">
    <subcellularLocation>
        <location evidence="1">Cytoplasm</location>
    </subcellularLocation>
</comment>
<comment type="similarity">
    <text evidence="1 2">Belongs to the NDK family.</text>
</comment>
<name>NDK_STAAM</name>
<accession>P68869</accession>
<accession>P50588</accession>
<feature type="chain" id="PRO_0000137045" description="Nucleoside diphosphate kinase">
    <location>
        <begin position="1"/>
        <end position="149"/>
    </location>
</feature>
<feature type="active site" description="Pros-phosphohistidine intermediate" evidence="1">
    <location>
        <position position="115"/>
    </location>
</feature>
<feature type="binding site" evidence="1">
    <location>
        <position position="9"/>
    </location>
    <ligand>
        <name>ATP</name>
        <dbReference type="ChEBI" id="CHEBI:30616"/>
    </ligand>
</feature>
<feature type="binding site" evidence="1">
    <location>
        <position position="57"/>
    </location>
    <ligand>
        <name>ATP</name>
        <dbReference type="ChEBI" id="CHEBI:30616"/>
    </ligand>
</feature>
<feature type="binding site" evidence="1">
    <location>
        <position position="85"/>
    </location>
    <ligand>
        <name>ATP</name>
        <dbReference type="ChEBI" id="CHEBI:30616"/>
    </ligand>
</feature>
<feature type="binding site" evidence="1">
    <location>
        <position position="91"/>
    </location>
    <ligand>
        <name>ATP</name>
        <dbReference type="ChEBI" id="CHEBI:30616"/>
    </ligand>
</feature>
<feature type="binding site" evidence="1">
    <location>
        <position position="102"/>
    </location>
    <ligand>
        <name>ATP</name>
        <dbReference type="ChEBI" id="CHEBI:30616"/>
    </ligand>
</feature>
<feature type="binding site" evidence="1">
    <location>
        <position position="112"/>
    </location>
    <ligand>
        <name>ATP</name>
        <dbReference type="ChEBI" id="CHEBI:30616"/>
    </ligand>
</feature>
<evidence type="ECO:0000255" key="1">
    <source>
        <dbReference type="HAMAP-Rule" id="MF_00451"/>
    </source>
</evidence>
<evidence type="ECO:0000305" key="2"/>
<keyword id="KW-0067">ATP-binding</keyword>
<keyword id="KW-0963">Cytoplasm</keyword>
<keyword id="KW-0418">Kinase</keyword>
<keyword id="KW-0460">Magnesium</keyword>
<keyword id="KW-0479">Metal-binding</keyword>
<keyword id="KW-0546">Nucleotide metabolism</keyword>
<keyword id="KW-0547">Nucleotide-binding</keyword>
<keyword id="KW-0597">Phosphoprotein</keyword>
<keyword id="KW-0808">Transferase</keyword>
<gene>
    <name evidence="1" type="primary">ndk</name>
    <name type="ordered locus">SAV1469</name>
</gene>
<reference key="1">
    <citation type="journal article" date="2001" name="Lancet">
        <title>Whole genome sequencing of meticillin-resistant Staphylococcus aureus.</title>
        <authorList>
            <person name="Kuroda M."/>
            <person name="Ohta T."/>
            <person name="Uchiyama I."/>
            <person name="Baba T."/>
            <person name="Yuzawa H."/>
            <person name="Kobayashi I."/>
            <person name="Cui L."/>
            <person name="Oguchi A."/>
            <person name="Aoki K."/>
            <person name="Nagai Y."/>
            <person name="Lian J.-Q."/>
            <person name="Ito T."/>
            <person name="Kanamori M."/>
            <person name="Matsumaru H."/>
            <person name="Maruyama A."/>
            <person name="Murakami H."/>
            <person name="Hosoyama A."/>
            <person name="Mizutani-Ui Y."/>
            <person name="Takahashi N.K."/>
            <person name="Sawano T."/>
            <person name="Inoue R."/>
            <person name="Kaito C."/>
            <person name="Sekimizu K."/>
            <person name="Hirakawa H."/>
            <person name="Kuhara S."/>
            <person name="Goto S."/>
            <person name="Yabuzaki J."/>
            <person name="Kanehisa M."/>
            <person name="Yamashita A."/>
            <person name="Oshima K."/>
            <person name="Furuya K."/>
            <person name="Yoshino C."/>
            <person name="Shiba T."/>
            <person name="Hattori M."/>
            <person name="Ogasawara N."/>
            <person name="Hayashi H."/>
            <person name="Hiramatsu K."/>
        </authorList>
    </citation>
    <scope>NUCLEOTIDE SEQUENCE [LARGE SCALE GENOMIC DNA]</scope>
    <source>
        <strain>Mu50 / ATCC 700699</strain>
    </source>
</reference>
<organism>
    <name type="scientific">Staphylococcus aureus (strain Mu50 / ATCC 700699)</name>
    <dbReference type="NCBI Taxonomy" id="158878"/>
    <lineage>
        <taxon>Bacteria</taxon>
        <taxon>Bacillati</taxon>
        <taxon>Bacillota</taxon>
        <taxon>Bacilli</taxon>
        <taxon>Bacillales</taxon>
        <taxon>Staphylococcaceae</taxon>
        <taxon>Staphylococcus</taxon>
    </lineage>
</organism>
<dbReference type="EC" id="2.7.4.6" evidence="1"/>
<dbReference type="EMBL" id="BA000017">
    <property type="protein sequence ID" value="BAB57631.1"/>
    <property type="molecule type" value="Genomic_DNA"/>
</dbReference>
<dbReference type="RefSeq" id="WP_000442480.1">
    <property type="nucleotide sequence ID" value="NC_002758.2"/>
</dbReference>
<dbReference type="SMR" id="P68869"/>
<dbReference type="GeneID" id="66839658"/>
<dbReference type="KEGG" id="sav:SAV1469"/>
<dbReference type="HOGENOM" id="CLU_060216_6_3_9"/>
<dbReference type="PhylomeDB" id="P68869"/>
<dbReference type="Proteomes" id="UP000002481">
    <property type="component" value="Chromosome"/>
</dbReference>
<dbReference type="GO" id="GO:0005737">
    <property type="term" value="C:cytoplasm"/>
    <property type="evidence" value="ECO:0007669"/>
    <property type="project" value="UniProtKB-SubCell"/>
</dbReference>
<dbReference type="GO" id="GO:0005524">
    <property type="term" value="F:ATP binding"/>
    <property type="evidence" value="ECO:0007669"/>
    <property type="project" value="UniProtKB-UniRule"/>
</dbReference>
<dbReference type="GO" id="GO:0046872">
    <property type="term" value="F:metal ion binding"/>
    <property type="evidence" value="ECO:0007669"/>
    <property type="project" value="UniProtKB-KW"/>
</dbReference>
<dbReference type="GO" id="GO:0004550">
    <property type="term" value="F:nucleoside diphosphate kinase activity"/>
    <property type="evidence" value="ECO:0007669"/>
    <property type="project" value="UniProtKB-UniRule"/>
</dbReference>
<dbReference type="GO" id="GO:0006241">
    <property type="term" value="P:CTP biosynthetic process"/>
    <property type="evidence" value="ECO:0007669"/>
    <property type="project" value="UniProtKB-UniRule"/>
</dbReference>
<dbReference type="GO" id="GO:0006183">
    <property type="term" value="P:GTP biosynthetic process"/>
    <property type="evidence" value="ECO:0007669"/>
    <property type="project" value="UniProtKB-UniRule"/>
</dbReference>
<dbReference type="GO" id="GO:0006228">
    <property type="term" value="P:UTP biosynthetic process"/>
    <property type="evidence" value="ECO:0007669"/>
    <property type="project" value="UniProtKB-UniRule"/>
</dbReference>
<dbReference type="CDD" id="cd04413">
    <property type="entry name" value="NDPk_I"/>
    <property type="match status" value="1"/>
</dbReference>
<dbReference type="FunFam" id="3.30.70.141:FF:000002">
    <property type="entry name" value="Nucleoside diphosphate kinase"/>
    <property type="match status" value="1"/>
</dbReference>
<dbReference type="Gene3D" id="3.30.70.141">
    <property type="entry name" value="Nucleoside diphosphate kinase-like domain"/>
    <property type="match status" value="1"/>
</dbReference>
<dbReference type="HAMAP" id="MF_00451">
    <property type="entry name" value="NDP_kinase"/>
    <property type="match status" value="1"/>
</dbReference>
<dbReference type="InterPro" id="IPR034907">
    <property type="entry name" value="NDK-like_dom"/>
</dbReference>
<dbReference type="InterPro" id="IPR036850">
    <property type="entry name" value="NDK-like_dom_sf"/>
</dbReference>
<dbReference type="InterPro" id="IPR001564">
    <property type="entry name" value="Nucleoside_diP_kinase"/>
</dbReference>
<dbReference type="InterPro" id="IPR023005">
    <property type="entry name" value="Nucleoside_diP_kinase_AS"/>
</dbReference>
<dbReference type="NCBIfam" id="NF001908">
    <property type="entry name" value="PRK00668.1"/>
    <property type="match status" value="1"/>
</dbReference>
<dbReference type="PANTHER" id="PTHR11349">
    <property type="entry name" value="NUCLEOSIDE DIPHOSPHATE KINASE"/>
    <property type="match status" value="1"/>
</dbReference>
<dbReference type="Pfam" id="PF00334">
    <property type="entry name" value="NDK"/>
    <property type="match status" value="1"/>
</dbReference>
<dbReference type="PRINTS" id="PR01243">
    <property type="entry name" value="NUCDPKINASE"/>
</dbReference>
<dbReference type="SMART" id="SM00562">
    <property type="entry name" value="NDK"/>
    <property type="match status" value="1"/>
</dbReference>
<dbReference type="SUPFAM" id="SSF54919">
    <property type="entry name" value="Nucleoside diphosphate kinase, NDK"/>
    <property type="match status" value="1"/>
</dbReference>
<dbReference type="PROSITE" id="PS00469">
    <property type="entry name" value="NDPK"/>
    <property type="match status" value="1"/>
</dbReference>
<dbReference type="PROSITE" id="PS51374">
    <property type="entry name" value="NDPK_LIKE"/>
    <property type="match status" value="1"/>
</dbReference>
<protein>
    <recommendedName>
        <fullName evidence="1">Nucleoside diphosphate kinase</fullName>
        <shortName evidence="1">NDK</shortName>
        <shortName evidence="1">NDP kinase</shortName>
        <ecNumber evidence="1">2.7.4.6</ecNumber>
    </recommendedName>
    <alternativeName>
        <fullName evidence="1">Nucleoside-2-P kinase</fullName>
    </alternativeName>
</protein>
<proteinExistence type="inferred from homology"/>
<sequence length="149" mass="16575">MERTFLMIKPDAVQRNLIGEVISRIERKGLKLVGGKLMQVPMELAETHYGEHQGKPFYNDLISFITSAPVFAMVVEGEDAVNVSRHIIGSTNPSEASPGSIRGDLGLTVGRNIIHGSDSLESAEREINLWFNENEITSYASPRDAWLYE</sequence>